<name>FZD7_MOUSE</name>
<evidence type="ECO:0000250" key="1"/>
<evidence type="ECO:0000250" key="2">
    <source>
        <dbReference type="UniProtKB" id="O75084"/>
    </source>
</evidence>
<evidence type="ECO:0000255" key="3"/>
<evidence type="ECO:0000255" key="4">
    <source>
        <dbReference type="PROSITE-ProRule" id="PRU00090"/>
    </source>
</evidence>
<evidence type="ECO:0000269" key="5">
    <source>
    </source>
</evidence>
<evidence type="ECO:0000269" key="6">
    <source>
    </source>
</evidence>
<evidence type="ECO:0000269" key="7">
    <source>
    </source>
</evidence>
<evidence type="ECO:0000305" key="8"/>
<proteinExistence type="evidence at protein level"/>
<feature type="signal peptide" evidence="3">
    <location>
        <begin position="1"/>
        <end position="32"/>
    </location>
</feature>
<feature type="chain" id="PRO_0000012997" description="Frizzled-7">
    <location>
        <begin position="33"/>
        <end position="572"/>
    </location>
</feature>
<feature type="topological domain" description="Extracellular" evidence="3">
    <location>
        <begin position="33"/>
        <end position="254"/>
    </location>
</feature>
<feature type="transmembrane region" description="Helical; Name=1" evidence="3">
    <location>
        <begin position="255"/>
        <end position="275"/>
    </location>
</feature>
<feature type="topological domain" description="Cytoplasmic" evidence="3">
    <location>
        <begin position="276"/>
        <end position="286"/>
    </location>
</feature>
<feature type="transmembrane region" description="Helical; Name=2" evidence="3">
    <location>
        <begin position="287"/>
        <end position="307"/>
    </location>
</feature>
<feature type="topological domain" description="Extracellular" evidence="3">
    <location>
        <begin position="308"/>
        <end position="334"/>
    </location>
</feature>
<feature type="transmembrane region" description="Helical; Name=3" evidence="3">
    <location>
        <begin position="335"/>
        <end position="355"/>
    </location>
</feature>
<feature type="topological domain" description="Cytoplasmic" evidence="3">
    <location>
        <begin position="356"/>
        <end position="377"/>
    </location>
</feature>
<feature type="transmembrane region" description="Helical; Name=4" evidence="3">
    <location>
        <begin position="378"/>
        <end position="398"/>
    </location>
</feature>
<feature type="topological domain" description="Extracellular" evidence="3">
    <location>
        <begin position="399"/>
        <end position="421"/>
    </location>
</feature>
<feature type="transmembrane region" description="Helical; Name=5" evidence="3">
    <location>
        <begin position="422"/>
        <end position="442"/>
    </location>
</feature>
<feature type="topological domain" description="Cytoplasmic" evidence="3">
    <location>
        <begin position="443"/>
        <end position="468"/>
    </location>
</feature>
<feature type="transmembrane region" description="Helical; Name=6" evidence="3">
    <location>
        <begin position="469"/>
        <end position="489"/>
    </location>
</feature>
<feature type="topological domain" description="Extracellular" evidence="3">
    <location>
        <begin position="490"/>
        <end position="526"/>
    </location>
</feature>
<feature type="transmembrane region" description="Helical; Name=7" evidence="3">
    <location>
        <begin position="527"/>
        <end position="547"/>
    </location>
</feature>
<feature type="topological domain" description="Cytoplasmic" evidence="3">
    <location>
        <begin position="548"/>
        <end position="572"/>
    </location>
</feature>
<feature type="domain" description="FZ" evidence="4">
    <location>
        <begin position="44"/>
        <end position="163"/>
    </location>
</feature>
<feature type="short sequence motif" description="Lys-Thr-X-X-X-Trp motif, mediates interaction with the PDZ domain of Dvl family members" evidence="1">
    <location>
        <begin position="550"/>
        <end position="555"/>
    </location>
</feature>
<feature type="short sequence motif" description="PDZ-binding">
    <location>
        <begin position="570"/>
        <end position="572"/>
    </location>
</feature>
<feature type="site" description="Essential for SDCBP-mediated plasma membrane phosphatidylinositol-4,5-bisphosphate recognition" evidence="2">
    <location>
        <position position="567"/>
    </location>
</feature>
<feature type="glycosylation site" description="N-linked (GlcNAc...) asparagine" evidence="3">
    <location>
        <position position="63"/>
    </location>
</feature>
<feature type="glycosylation site" description="N-linked (GlcNAc...) asparagine" evidence="3">
    <location>
        <position position="164"/>
    </location>
</feature>
<feature type="disulfide bond" evidence="4">
    <location>
        <begin position="49"/>
        <end position="110"/>
    </location>
</feature>
<feature type="disulfide bond" evidence="4">
    <location>
        <begin position="57"/>
        <end position="103"/>
    </location>
</feature>
<feature type="disulfide bond" evidence="4">
    <location>
        <begin position="94"/>
        <end position="131"/>
    </location>
</feature>
<feature type="disulfide bond" evidence="4">
    <location>
        <begin position="120"/>
        <end position="160"/>
    </location>
</feature>
<feature type="disulfide bond" evidence="4">
    <location>
        <begin position="124"/>
        <end position="148"/>
    </location>
</feature>
<feature type="sequence conflict" description="In Ref. 1; AAC52432." evidence="8" ref="1">
    <original>C</original>
    <variation>S</variation>
    <location>
        <position position="262"/>
    </location>
</feature>
<feature type="sequence conflict" description="In Ref. 1; AAC52432." evidence="8" ref="1">
    <original>G</original>
    <variation>R</variation>
    <location>
        <position position="516"/>
    </location>
</feature>
<dbReference type="EMBL" id="U43320">
    <property type="protein sequence ID" value="AAC52432.1"/>
    <property type="molecule type" value="mRNA"/>
</dbReference>
<dbReference type="EMBL" id="AC132574">
    <property type="status" value="NOT_ANNOTATED_CDS"/>
    <property type="molecule type" value="Genomic_DNA"/>
</dbReference>
<dbReference type="EMBL" id="CH466548">
    <property type="protein sequence ID" value="EDL00127.1"/>
    <property type="molecule type" value="Genomic_DNA"/>
</dbReference>
<dbReference type="CCDS" id="CCDS14985.1"/>
<dbReference type="RefSeq" id="NP_032083.3">
    <property type="nucleotide sequence ID" value="NM_008057.3"/>
</dbReference>
<dbReference type="SMR" id="Q61090"/>
<dbReference type="BioGRID" id="199780">
    <property type="interactions" value="4"/>
</dbReference>
<dbReference type="CORUM" id="Q61090"/>
<dbReference type="FunCoup" id="Q61090">
    <property type="interactions" value="1566"/>
</dbReference>
<dbReference type="IntAct" id="Q61090">
    <property type="interactions" value="4"/>
</dbReference>
<dbReference type="MINT" id="Q61090"/>
<dbReference type="STRING" id="10090.ENSMUSP00000109884"/>
<dbReference type="GlyCosmos" id="Q61090">
    <property type="glycosylation" value="2 sites, No reported glycans"/>
</dbReference>
<dbReference type="GlyGen" id="Q61090">
    <property type="glycosylation" value="2 sites"/>
</dbReference>
<dbReference type="iPTMnet" id="Q61090"/>
<dbReference type="PhosphoSitePlus" id="Q61090"/>
<dbReference type="PaxDb" id="10090-ENSMUSP00000109884"/>
<dbReference type="PeptideAtlas" id="Q61090"/>
<dbReference type="ProteomicsDB" id="271656"/>
<dbReference type="Pumba" id="Q61090"/>
<dbReference type="Antibodypedia" id="19943">
    <property type="antibodies" value="529 antibodies from 39 providers"/>
</dbReference>
<dbReference type="DNASU" id="14369"/>
<dbReference type="Ensembl" id="ENSMUST00000114246.4">
    <property type="protein sequence ID" value="ENSMUSP00000109884.3"/>
    <property type="gene ID" value="ENSMUSG00000041075.9"/>
</dbReference>
<dbReference type="GeneID" id="14369"/>
<dbReference type="KEGG" id="mmu:14369"/>
<dbReference type="UCSC" id="uc011wlq.1">
    <property type="organism name" value="mouse"/>
</dbReference>
<dbReference type="AGR" id="MGI:108570"/>
<dbReference type="CTD" id="8324"/>
<dbReference type="MGI" id="MGI:108570">
    <property type="gene designation" value="Fzd7"/>
</dbReference>
<dbReference type="VEuPathDB" id="HostDB:ENSMUSG00000041075"/>
<dbReference type="eggNOG" id="KOG3577">
    <property type="taxonomic scope" value="Eukaryota"/>
</dbReference>
<dbReference type="GeneTree" id="ENSGT00940000158239"/>
<dbReference type="HOGENOM" id="CLU_007873_2_1_1"/>
<dbReference type="InParanoid" id="Q61090"/>
<dbReference type="OMA" id="SFSCPRQ"/>
<dbReference type="OrthoDB" id="10053709at2759"/>
<dbReference type="PhylomeDB" id="Q61090"/>
<dbReference type="TreeFam" id="TF317907"/>
<dbReference type="Reactome" id="R-MMU-4086400">
    <property type="pathway name" value="PCP/CE pathway"/>
</dbReference>
<dbReference type="Reactome" id="R-MMU-4608870">
    <property type="pathway name" value="Asymmetric localization of PCP proteins"/>
</dbReference>
<dbReference type="BioGRID-ORCS" id="14369">
    <property type="hits" value="1 hit in 76 CRISPR screens"/>
</dbReference>
<dbReference type="ChiTaRS" id="Fzd7">
    <property type="organism name" value="mouse"/>
</dbReference>
<dbReference type="PRO" id="PR:Q61090"/>
<dbReference type="Proteomes" id="UP000000589">
    <property type="component" value="Chromosome 1"/>
</dbReference>
<dbReference type="RNAct" id="Q61090">
    <property type="molecule type" value="protein"/>
</dbReference>
<dbReference type="Bgee" id="ENSMUSG00000041075">
    <property type="expression patterns" value="Expressed in ureter smooth muscle and 268 other cell types or tissues"/>
</dbReference>
<dbReference type="GO" id="GO:0005886">
    <property type="term" value="C:plasma membrane"/>
    <property type="evidence" value="ECO:0000314"/>
    <property type="project" value="MGI"/>
</dbReference>
<dbReference type="GO" id="GO:0055038">
    <property type="term" value="C:recycling endosome membrane"/>
    <property type="evidence" value="ECO:0007669"/>
    <property type="project" value="Ensembl"/>
</dbReference>
<dbReference type="GO" id="GO:0005109">
    <property type="term" value="F:frizzled binding"/>
    <property type="evidence" value="ECO:0007669"/>
    <property type="project" value="Ensembl"/>
</dbReference>
<dbReference type="GO" id="GO:0004930">
    <property type="term" value="F:G protein-coupled receptor activity"/>
    <property type="evidence" value="ECO:0007669"/>
    <property type="project" value="UniProtKB-KW"/>
</dbReference>
<dbReference type="GO" id="GO:0030165">
    <property type="term" value="F:PDZ domain binding"/>
    <property type="evidence" value="ECO:0007669"/>
    <property type="project" value="Ensembl"/>
</dbReference>
<dbReference type="GO" id="GO:0005546">
    <property type="term" value="F:phosphatidylinositol-4,5-bisphosphate binding"/>
    <property type="evidence" value="ECO:0007669"/>
    <property type="project" value="Ensembl"/>
</dbReference>
<dbReference type="GO" id="GO:0042813">
    <property type="term" value="F:Wnt receptor activity"/>
    <property type="evidence" value="ECO:0000315"/>
    <property type="project" value="MGI"/>
</dbReference>
<dbReference type="GO" id="GO:0017147">
    <property type="term" value="F:Wnt-protein binding"/>
    <property type="evidence" value="ECO:0000353"/>
    <property type="project" value="MGI"/>
</dbReference>
<dbReference type="GO" id="GO:0060070">
    <property type="term" value="P:canonical Wnt signaling pathway"/>
    <property type="evidence" value="ECO:0000315"/>
    <property type="project" value="MGI"/>
</dbReference>
<dbReference type="GO" id="GO:0060231">
    <property type="term" value="P:mesenchymal to epithelial transition"/>
    <property type="evidence" value="ECO:0007669"/>
    <property type="project" value="Ensembl"/>
</dbReference>
<dbReference type="GO" id="GO:2000726">
    <property type="term" value="P:negative regulation of cardiac muscle cell differentiation"/>
    <property type="evidence" value="ECO:0007669"/>
    <property type="project" value="Ensembl"/>
</dbReference>
<dbReference type="GO" id="GO:0010812">
    <property type="term" value="P:negative regulation of cell-substrate adhesion"/>
    <property type="evidence" value="ECO:0000315"/>
    <property type="project" value="BHF-UCL"/>
</dbReference>
<dbReference type="GO" id="GO:0042666">
    <property type="term" value="P:negative regulation of ectodermal cell fate specification"/>
    <property type="evidence" value="ECO:0007669"/>
    <property type="project" value="Ensembl"/>
</dbReference>
<dbReference type="GO" id="GO:0035567">
    <property type="term" value="P:non-canonical Wnt signaling pathway"/>
    <property type="evidence" value="ECO:0000316"/>
    <property type="project" value="MGI"/>
</dbReference>
<dbReference type="GO" id="GO:0045893">
    <property type="term" value="P:positive regulation of DNA-templated transcription"/>
    <property type="evidence" value="ECO:0007669"/>
    <property type="project" value="Ensembl"/>
</dbReference>
<dbReference type="GO" id="GO:0060054">
    <property type="term" value="P:positive regulation of epithelial cell proliferation involved in wound healing"/>
    <property type="evidence" value="ECO:0007669"/>
    <property type="project" value="Ensembl"/>
</dbReference>
<dbReference type="GO" id="GO:0043410">
    <property type="term" value="P:positive regulation of MAPK cascade"/>
    <property type="evidence" value="ECO:0007669"/>
    <property type="project" value="Ensembl"/>
</dbReference>
<dbReference type="GO" id="GO:0042327">
    <property type="term" value="P:positive regulation of phosphorylation"/>
    <property type="evidence" value="ECO:0007669"/>
    <property type="project" value="Ensembl"/>
</dbReference>
<dbReference type="GO" id="GO:0060828">
    <property type="term" value="P:regulation of canonical Wnt signaling pathway"/>
    <property type="evidence" value="ECO:0007669"/>
    <property type="project" value="Ensembl"/>
</dbReference>
<dbReference type="GO" id="GO:0014834">
    <property type="term" value="P:skeletal muscle satellite cell maintenance involved in skeletal muscle regeneration"/>
    <property type="evidence" value="ECO:0000315"/>
    <property type="project" value="MGI"/>
</dbReference>
<dbReference type="GO" id="GO:0048103">
    <property type="term" value="P:somatic stem cell division"/>
    <property type="evidence" value="ECO:0000315"/>
    <property type="project" value="MGI"/>
</dbReference>
<dbReference type="GO" id="GO:0019827">
    <property type="term" value="P:stem cell population maintenance"/>
    <property type="evidence" value="ECO:0007669"/>
    <property type="project" value="Ensembl"/>
</dbReference>
<dbReference type="GO" id="GO:0034446">
    <property type="term" value="P:substrate adhesion-dependent cell spreading"/>
    <property type="evidence" value="ECO:0000315"/>
    <property type="project" value="MGI"/>
</dbReference>
<dbReference type="GO" id="GO:0033077">
    <property type="term" value="P:T cell differentiation in thymus"/>
    <property type="evidence" value="ECO:0000315"/>
    <property type="project" value="MGI"/>
</dbReference>
<dbReference type="CDD" id="cd15246">
    <property type="entry name" value="7tmF_FZD7"/>
    <property type="match status" value="1"/>
</dbReference>
<dbReference type="CDD" id="cd07466">
    <property type="entry name" value="CRD_FZ7"/>
    <property type="match status" value="1"/>
</dbReference>
<dbReference type="FunFam" id="1.10.2000.10:FF:000003">
    <property type="entry name" value="Frizzled class receptor 2"/>
    <property type="match status" value="1"/>
</dbReference>
<dbReference type="FunFam" id="1.20.1070.10:FF:000029">
    <property type="entry name" value="Frizzled class receptor 2"/>
    <property type="match status" value="1"/>
</dbReference>
<dbReference type="Gene3D" id="1.10.2000.10">
    <property type="entry name" value="Frizzled cysteine-rich domain"/>
    <property type="match status" value="1"/>
</dbReference>
<dbReference type="Gene3D" id="1.20.1070.10">
    <property type="entry name" value="Rhodopsin 7-helix transmembrane proteins"/>
    <property type="match status" value="1"/>
</dbReference>
<dbReference type="InterPro" id="IPR042742">
    <property type="entry name" value="Frizzled-7_CRD"/>
</dbReference>
<dbReference type="InterPro" id="IPR015526">
    <property type="entry name" value="Frizzled/SFRP"/>
</dbReference>
<dbReference type="InterPro" id="IPR000539">
    <property type="entry name" value="Frizzled/Smoothened_7TM"/>
</dbReference>
<dbReference type="InterPro" id="IPR020067">
    <property type="entry name" value="Frizzled_dom"/>
</dbReference>
<dbReference type="InterPro" id="IPR036790">
    <property type="entry name" value="Frizzled_dom_sf"/>
</dbReference>
<dbReference type="InterPro" id="IPR017981">
    <property type="entry name" value="GPCR_2-like_7TM"/>
</dbReference>
<dbReference type="PANTHER" id="PTHR11309">
    <property type="entry name" value="FRIZZLED"/>
    <property type="match status" value="1"/>
</dbReference>
<dbReference type="PANTHER" id="PTHR11309:SF31">
    <property type="entry name" value="FRIZZLED-7"/>
    <property type="match status" value="1"/>
</dbReference>
<dbReference type="Pfam" id="PF01534">
    <property type="entry name" value="Frizzled"/>
    <property type="match status" value="1"/>
</dbReference>
<dbReference type="Pfam" id="PF01392">
    <property type="entry name" value="Fz"/>
    <property type="match status" value="1"/>
</dbReference>
<dbReference type="PRINTS" id="PR00489">
    <property type="entry name" value="FRIZZLED"/>
</dbReference>
<dbReference type="SMART" id="SM00063">
    <property type="entry name" value="FRI"/>
    <property type="match status" value="1"/>
</dbReference>
<dbReference type="SMART" id="SM01330">
    <property type="entry name" value="Frizzled"/>
    <property type="match status" value="1"/>
</dbReference>
<dbReference type="SUPFAM" id="SSF63501">
    <property type="entry name" value="Frizzled cysteine-rich domain"/>
    <property type="match status" value="1"/>
</dbReference>
<dbReference type="PROSITE" id="PS50038">
    <property type="entry name" value="FZ"/>
    <property type="match status" value="1"/>
</dbReference>
<dbReference type="PROSITE" id="PS50261">
    <property type="entry name" value="G_PROTEIN_RECEP_F2_4"/>
    <property type="match status" value="1"/>
</dbReference>
<keyword id="KW-1003">Cell membrane</keyword>
<keyword id="KW-0217">Developmental protein</keyword>
<keyword id="KW-1015">Disulfide bond</keyword>
<keyword id="KW-0967">Endosome</keyword>
<keyword id="KW-0297">G-protein coupled receptor</keyword>
<keyword id="KW-0325">Glycoprotein</keyword>
<keyword id="KW-0472">Membrane</keyword>
<keyword id="KW-0675">Receptor</keyword>
<keyword id="KW-1185">Reference proteome</keyword>
<keyword id="KW-0732">Signal</keyword>
<keyword id="KW-0807">Transducer</keyword>
<keyword id="KW-0812">Transmembrane</keyword>
<keyword id="KW-1133">Transmembrane helix</keyword>
<keyword id="KW-0832">Ubl conjugation</keyword>
<keyword id="KW-0879">Wnt signaling pathway</keyword>
<protein>
    <recommendedName>
        <fullName>Frizzled-7</fullName>
        <shortName>Fz-7</shortName>
        <shortName>mFz7</shortName>
    </recommendedName>
</protein>
<reference key="1">
    <citation type="journal article" date="1996" name="J. Biol. Chem.">
        <title>A large family of putative transmembrane receptors homologous to the product of the Drosophila tissue polarity gene frizzled.</title>
        <authorList>
            <person name="Wang Y."/>
            <person name="Macke J.P."/>
            <person name="Abella B.S."/>
            <person name="Andreasson K."/>
            <person name="Worley P."/>
            <person name="Gilbert D.J."/>
            <person name="Copeland N.G."/>
            <person name="Jenkins N.A."/>
            <person name="Nathans J."/>
        </authorList>
    </citation>
    <scope>NUCLEOTIDE SEQUENCE [MRNA]</scope>
</reference>
<reference key="2">
    <citation type="journal article" date="2009" name="PLoS Biol.">
        <title>Lineage-specific biology revealed by a finished genome assembly of the mouse.</title>
        <authorList>
            <person name="Church D.M."/>
            <person name="Goodstadt L."/>
            <person name="Hillier L.W."/>
            <person name="Zody M.C."/>
            <person name="Goldstein S."/>
            <person name="She X."/>
            <person name="Bult C.J."/>
            <person name="Agarwala R."/>
            <person name="Cherry J.L."/>
            <person name="DiCuccio M."/>
            <person name="Hlavina W."/>
            <person name="Kapustin Y."/>
            <person name="Meric P."/>
            <person name="Maglott D."/>
            <person name="Birtle Z."/>
            <person name="Marques A.C."/>
            <person name="Graves T."/>
            <person name="Zhou S."/>
            <person name="Teague B."/>
            <person name="Potamousis K."/>
            <person name="Churas C."/>
            <person name="Place M."/>
            <person name="Herschleb J."/>
            <person name="Runnheim R."/>
            <person name="Forrest D."/>
            <person name="Amos-Landgraf J."/>
            <person name="Schwartz D.C."/>
            <person name="Cheng Z."/>
            <person name="Lindblad-Toh K."/>
            <person name="Eichler E.E."/>
            <person name="Ponting C.P."/>
        </authorList>
    </citation>
    <scope>NUCLEOTIDE SEQUENCE [LARGE SCALE GENOMIC DNA]</scope>
    <source>
        <strain>C57BL/6J</strain>
    </source>
</reference>
<reference key="3">
    <citation type="submission" date="2005-07" db="EMBL/GenBank/DDBJ databases">
        <authorList>
            <person name="Mural R.J."/>
            <person name="Adams M.D."/>
            <person name="Myers E.W."/>
            <person name="Smith H.O."/>
            <person name="Venter J.C."/>
        </authorList>
    </citation>
    <scope>NUCLEOTIDE SEQUENCE [LARGE SCALE GENOMIC DNA]</scope>
</reference>
<reference key="4">
    <citation type="journal article" date="1999" name="Curr. Biol.">
        <title>Protein kinase C is differentially stimulated by Wnt and Frizzled homologs in a G-protein-dependent manner.</title>
        <authorList>
            <person name="Sheldahl L.C."/>
            <person name="Park M."/>
            <person name="Malbon C.C."/>
            <person name="Moon R.T."/>
        </authorList>
    </citation>
    <scope>COUPLING TO BETA-CATENIN PATHWAY</scope>
</reference>
<reference key="5">
    <citation type="journal article" date="1999" name="Proc. Natl. Acad. Sci. U.S.A.">
        <title>Biochemical characterization of Wnt-frizzled interactions using a soluble, biologically active vertebrate Wnt protein.</title>
        <authorList>
            <person name="Hsieh J.C."/>
            <person name="Rattner A."/>
            <person name="Smallwood P.M."/>
            <person name="Nathans J."/>
        </authorList>
    </citation>
    <scope>FUNCTION</scope>
    <scope>SUBCELLULAR LOCATION</scope>
</reference>
<reference key="6">
    <citation type="journal article" date="2004" name="Cell Res.">
        <title>Characterization of function of three domains in dishevelled-1: DEP domain is responsible for membrane translocation of dishevelled-1.</title>
        <authorList>
            <person name="Pan W.J."/>
            <person name="Pang S.Z."/>
            <person name="Huang T."/>
            <person name="Guo H.Y."/>
            <person name="Wu D."/>
            <person name="Li L."/>
        </authorList>
    </citation>
    <scope>FUNCTION</scope>
    <scope>SUBCELLULAR LOCATION</scope>
    <scope>INTERACTION WITH DVL1</scope>
</reference>
<reference key="7">
    <citation type="journal article" date="2004" name="Oncogene">
        <title>MAGI-3 is involved in the regulation of the JNK signaling pathway as a scaffold protein for frizzled and Ltap.</title>
        <authorList>
            <person name="Yao R."/>
            <person name="Natsume Y."/>
            <person name="Noda T."/>
        </authorList>
    </citation>
    <scope>INTERACTION WITH MAGI3</scope>
</reference>
<comment type="function">
    <text evidence="2 5 7">Receptor for Wnt proteins. Most frizzled receptors are coupled to the beta-catenin canonical signaling pathway, which leads to the activation of disheveled proteins, inhibition of GSK-3 kinase, nuclear accumulation of beta-catenin and activation of Wnt target genes. A second signaling pathway involving PKC and calcium fluxes has been seen for some family members, but it is not yet clear if it represents a distinct pathway or if it can be integrated in the canonical pathway, as PKC seems to be required for Wnt-mediated inactivation of GSK-3 kinase. Both pathways seem to involve interactions with G-proteins. Activation by WNT8 induces expression of beta-catenin target genes. Following ligand activation, binds to CCDC88C/DAPLE which displaces DVL1 from FZD7 and leads to inhibition of canonical Wnt signaling, activation of G-proteins by CCDC88C and triggering of non-canonical Wnt responses (By similarity). May be involved in transduction and intercellular transmission of polarity information during tissue morphogenesis and/or in differentiated tissues.</text>
</comment>
<comment type="subunit">
    <text evidence="2 6 7">Interacts with MAGI3 (PubMed:15195140). Interacts with DVL1 (PubMed:15353129). Interacts with CCDC88C/DAPLE; the interaction displaces DVL1 from FZD7, leading to inhibition of canonical Wnt signaling and triggering of non-canonical Wnt responses (By similarity). Interacts with MYOC (By similarity). Binds to SDCBP; this interaction is increased by inositol trisphosphate (IP3) (By similarity). Interacts with glypican GPC3 (By similarity).</text>
</comment>
<comment type="interaction">
    <interactant intactId="EBI-8473104">
        <id>Q61090</id>
    </interactant>
    <interactant intactId="EBI-300895">
        <id>Q62108</id>
        <label>Dlg4</label>
    </interactant>
    <organismsDiffer>false</organismsDiffer>
    <experiments>4</experiments>
</comment>
<comment type="subcellular location">
    <subcellularLocation>
        <location evidence="5 7">Cell membrane</location>
        <topology evidence="5 7">Multi-pass membrane protein</topology>
    </subcellularLocation>
    <subcellularLocation>
        <location evidence="2">Endosome membrane</location>
        <topology evidence="2">Multi-pass membrane protein</topology>
    </subcellularLocation>
    <text evidence="2">Associated to the plasma membrane in the presence of FZD7 and phosphatidylinositol 4,5-bisphosphate (PIP2). Localized in recycling endosomes in other conditions.</text>
</comment>
<comment type="domain">
    <text evidence="1">Lys-Thr-X-X-X-Trp motif interacts with the PDZ domain of Dvl (Disheveled) family members and is involved in the activation of the Wnt/beta-catenin signaling pathway.</text>
</comment>
<comment type="domain">
    <text evidence="1">The FZ domain is involved in binding with Wnt ligands.</text>
</comment>
<comment type="PTM">
    <text evidence="1">Ubiquitinated by ZNRF3, leading to its degradation by the proteasome.</text>
</comment>
<comment type="similarity">
    <text evidence="8">Belongs to the G-protein coupled receptor Fz/Smo family.</text>
</comment>
<organism>
    <name type="scientific">Mus musculus</name>
    <name type="common">Mouse</name>
    <dbReference type="NCBI Taxonomy" id="10090"/>
    <lineage>
        <taxon>Eukaryota</taxon>
        <taxon>Metazoa</taxon>
        <taxon>Chordata</taxon>
        <taxon>Craniata</taxon>
        <taxon>Vertebrata</taxon>
        <taxon>Euteleostomi</taxon>
        <taxon>Mammalia</taxon>
        <taxon>Eutheria</taxon>
        <taxon>Euarchontoglires</taxon>
        <taxon>Glires</taxon>
        <taxon>Rodentia</taxon>
        <taxon>Myomorpha</taxon>
        <taxon>Muroidea</taxon>
        <taxon>Muridae</taxon>
        <taxon>Murinae</taxon>
        <taxon>Mus</taxon>
        <taxon>Mus</taxon>
    </lineage>
</organism>
<accession>Q61090</accession>
<accession>G3X953</accession>
<gene>
    <name type="primary">Fzd7</name>
</gene>
<sequence>MRGPGTAASHSPLGLCALVLALLGALPTDTRAQPYHGEKGISVPDHGFCQPISIPLCTDIAYNQTILPNLLGHTNQEDAGLEVHQFYPLVKVQCSPELRFFLCSMYAPVCTVLDQAIPPCRSLCERARQGCEALMNKFGFQWPERLRCENFPVHGAGEICVGQNTSDGSGGAGGSPTAYPTAPYLPDPPFTAMSPSDGRGRLSFPFSCPRQLKVPPYLGYRFLGERDCGAPCEPGRANGLMYFKEEERRFARLWVGVWSVLCCASTLFTVLTYLVDMRRFSYPERPIIFLSGCYFMVAVAHVAGFLLEDRAVCVERFSDDGYRTVAQGTKKEGCTILFMVLYFFGMASSIWWVILSLTWFLAAGMKWGHEAIEANSQYFHLAAWAVPAVKTITILAMGQVDGDLLSGVCYVGLSSVDALRGFVLAPLFVYLFIGTSFLLAGFVSLFRIRTIMKHDGTKTEKLEKLMVRIGVFSVLYTVPATIVLACYFYEQAFREHWERTWLLQTCKSYAVPCPPGHFSPMSPDFTVFMIKYLMTMIVGITTGFWIWSGKTLQSWRRFYHRLSHSSKGETAV</sequence>